<accession>Q5U201</accession>
<name>AMN1_RAT</name>
<gene>
    <name type="primary">Amn1</name>
</gene>
<proteinExistence type="evidence at transcript level"/>
<feature type="chain" id="PRO_0000289275" description="Protein AMN1 homolog">
    <location>
        <begin position="1"/>
        <end position="258"/>
    </location>
</feature>
<evidence type="ECO:0000250" key="1">
    <source>
        <dbReference type="UniProtKB" id="B8JKV0"/>
    </source>
</evidence>
<evidence type="ECO:0000305" key="2"/>
<comment type="subunit">
    <text evidence="1">Interacts with TASOR.</text>
</comment>
<comment type="similarity">
    <text evidence="2">Belongs to the AMN1 family.</text>
</comment>
<comment type="sequence caution" evidence="2">
    <conflict type="erroneous initiation">
        <sequence resource="EMBL-CDS" id="AAH86357"/>
    </conflict>
</comment>
<dbReference type="EMBL" id="BC086357">
    <property type="protein sequence ID" value="AAH86357.1"/>
    <property type="status" value="ALT_INIT"/>
    <property type="molecule type" value="mRNA"/>
</dbReference>
<dbReference type="RefSeq" id="NP_001008334.2">
    <property type="nucleotide sequence ID" value="NM_001008333.2"/>
</dbReference>
<dbReference type="SMR" id="Q5U201"/>
<dbReference type="FunCoup" id="Q5U201">
    <property type="interactions" value="1517"/>
</dbReference>
<dbReference type="STRING" id="10116.ENSRNOP00000052308"/>
<dbReference type="PhosphoSitePlus" id="Q5U201"/>
<dbReference type="PaxDb" id="10116-ENSRNOP00000052308"/>
<dbReference type="GeneID" id="302032"/>
<dbReference type="KEGG" id="rno:302032"/>
<dbReference type="AGR" id="RGD:1308119"/>
<dbReference type="CTD" id="196394"/>
<dbReference type="RGD" id="1308119">
    <property type="gene designation" value="Amn1"/>
</dbReference>
<dbReference type="VEuPathDB" id="HostDB:ENSRNOG00000036917"/>
<dbReference type="eggNOG" id="KOG1947">
    <property type="taxonomic scope" value="Eukaryota"/>
</dbReference>
<dbReference type="HOGENOM" id="CLU_087966_0_0_1"/>
<dbReference type="InParanoid" id="Q5U201"/>
<dbReference type="OrthoDB" id="15192at9989"/>
<dbReference type="PhylomeDB" id="Q5U201"/>
<dbReference type="TreeFam" id="TF331575"/>
<dbReference type="PRO" id="PR:Q5U201"/>
<dbReference type="Proteomes" id="UP000002494">
    <property type="component" value="Chromosome 4"/>
</dbReference>
<dbReference type="Bgee" id="ENSRNOG00000036917">
    <property type="expression patterns" value="Expressed in testis and 20 other cell types or tissues"/>
</dbReference>
<dbReference type="GO" id="GO:0031528">
    <property type="term" value="C:microvillus membrane"/>
    <property type="evidence" value="ECO:0000266"/>
    <property type="project" value="RGD"/>
</dbReference>
<dbReference type="GO" id="GO:0019005">
    <property type="term" value="C:SCF ubiquitin ligase complex"/>
    <property type="evidence" value="ECO:0000318"/>
    <property type="project" value="GO_Central"/>
</dbReference>
<dbReference type="GO" id="GO:0031146">
    <property type="term" value="P:SCF-dependent proteasomal ubiquitin-dependent protein catabolic process"/>
    <property type="evidence" value="ECO:0000318"/>
    <property type="project" value="GO_Central"/>
</dbReference>
<dbReference type="FunFam" id="3.80.10.10:FF:000178">
    <property type="entry name" value="protein AMN1 homolog isoform X1"/>
    <property type="match status" value="1"/>
</dbReference>
<dbReference type="Gene3D" id="3.80.10.10">
    <property type="entry name" value="Ribonuclease Inhibitor"/>
    <property type="match status" value="1"/>
</dbReference>
<dbReference type="InterPro" id="IPR001611">
    <property type="entry name" value="Leu-rich_rpt"/>
</dbReference>
<dbReference type="InterPro" id="IPR006553">
    <property type="entry name" value="Leu-rich_rpt_Cys-con_subtyp"/>
</dbReference>
<dbReference type="InterPro" id="IPR032675">
    <property type="entry name" value="LRR_dom_sf"/>
</dbReference>
<dbReference type="PANTHER" id="PTHR13318">
    <property type="entry name" value="PARTNER OF PAIRED, ISOFORM B-RELATED"/>
    <property type="match status" value="1"/>
</dbReference>
<dbReference type="PANTHER" id="PTHR13318:SF254">
    <property type="entry name" value="PROTEIN AMN1 HOMOLOG"/>
    <property type="match status" value="1"/>
</dbReference>
<dbReference type="Pfam" id="PF13516">
    <property type="entry name" value="LRR_6"/>
    <property type="match status" value="3"/>
</dbReference>
<dbReference type="SMART" id="SM00367">
    <property type="entry name" value="LRR_CC"/>
    <property type="match status" value="6"/>
</dbReference>
<dbReference type="SUPFAM" id="SSF52047">
    <property type="entry name" value="RNI-like"/>
    <property type="match status" value="1"/>
</dbReference>
<keyword id="KW-1185">Reference proteome</keyword>
<sequence length="258" mass="28466">MPSSRVVSQLLELCLRCLIINISRYISDIKYLPPNIKDRLIKIMSMRGRITDSNINEVLHPEVQRLDLRSCNISDVALQHLCKCRKLKALNLKSCREHRNSITSEGIKAVASSCSDLHEISLKGCCSVTDEGVLALALNCQLLKIIDLGGCLSITDESLHALGKNCPFLQCVDFSTTQVSDNGVVALVSGPCAKQLEEINMGYCINLTDKAVEAALTACPQICILLFHGCPLITDHSREVLEQLIGSRKLKQVTWSVY</sequence>
<protein>
    <recommendedName>
        <fullName>Protein AMN1 homolog</fullName>
    </recommendedName>
</protein>
<reference key="1">
    <citation type="journal article" date="2004" name="Genome Res.">
        <title>The status, quality, and expansion of the NIH full-length cDNA project: the Mammalian Gene Collection (MGC).</title>
        <authorList>
            <consortium name="The MGC Project Team"/>
        </authorList>
    </citation>
    <scope>NUCLEOTIDE SEQUENCE [LARGE SCALE MRNA]</scope>
    <source>
        <tissue>Ovary</tissue>
    </source>
</reference>
<organism>
    <name type="scientific">Rattus norvegicus</name>
    <name type="common">Rat</name>
    <dbReference type="NCBI Taxonomy" id="10116"/>
    <lineage>
        <taxon>Eukaryota</taxon>
        <taxon>Metazoa</taxon>
        <taxon>Chordata</taxon>
        <taxon>Craniata</taxon>
        <taxon>Vertebrata</taxon>
        <taxon>Euteleostomi</taxon>
        <taxon>Mammalia</taxon>
        <taxon>Eutheria</taxon>
        <taxon>Euarchontoglires</taxon>
        <taxon>Glires</taxon>
        <taxon>Rodentia</taxon>
        <taxon>Myomorpha</taxon>
        <taxon>Muroidea</taxon>
        <taxon>Muridae</taxon>
        <taxon>Murinae</taxon>
        <taxon>Rattus</taxon>
    </lineage>
</organism>